<name>RHMD_AZOC5</name>
<reference key="1">
    <citation type="submission" date="2007-04" db="EMBL/GenBank/DDBJ databases">
        <title>Complete genome sequence of the nitrogen-fixing bacterium Azorhizobium caulinodans ORS571.</title>
        <authorList>
            <person name="Lee K.B."/>
            <person name="Backer P.D."/>
            <person name="Aono T."/>
            <person name="Liu C.T."/>
            <person name="Suzuki S."/>
            <person name="Suzuki T."/>
            <person name="Kaneko T."/>
            <person name="Yamada M."/>
            <person name="Tabata S."/>
            <person name="Kupfer D.M."/>
            <person name="Najar F.Z."/>
            <person name="Wiley G.B."/>
            <person name="Roe B."/>
            <person name="Binnewies T."/>
            <person name="Ussery D."/>
            <person name="Vereecke D."/>
            <person name="Gevers D."/>
            <person name="Holsters M."/>
            <person name="Oyaizu H."/>
        </authorList>
    </citation>
    <scope>NUCLEOTIDE SEQUENCE [LARGE SCALE GENOMIC DNA]</scope>
    <source>
        <strain>ATCC 43989 / DSM 5975 / JCM 20966 / LMG 6465 / NBRC 14845 / NCIMB 13405 / ORS 571</strain>
    </source>
</reference>
<keyword id="KW-0456">Lyase</keyword>
<keyword id="KW-0460">Magnesium</keyword>
<keyword id="KW-0479">Metal-binding</keyword>
<keyword id="KW-1185">Reference proteome</keyword>
<sequence length="393" mass="44053">MSVPTIREVRAYVVRGGGGDYHDQQGTHWIDDHIATPMSKYPAYRQSRRTFGINVLGTLVVEVEASDGTVGFAVTTGGEPAAWIVEKHLARFIEGAKITDIELMWDQMYRSTLYYGRKGLVVNTISGVDLALWDLLAKWRKEPVYHLLGGAVRDELQFYATGARPDLAKEMGFIGGKMALHHGPAEGEEGLRKNLDILNDMRNKVGKDFWLMQDCWMALDVEYATRFSTIAWNEMGLKWTEEALPPDDYWGYAALKKNAPKGHLITTGEHEATRWGFKMLLDMECCDIIQPDVGWCGGITELIKITALADAAGVLVVPHGSSVYSYHFVITRHNSPFAEFLMMHPVPDQVVPMFTPLLLDEPVPVNGRLKLDDTPGFGVRLNPECKLSRPYTH</sequence>
<evidence type="ECO:0000255" key="1">
    <source>
        <dbReference type="HAMAP-Rule" id="MF_01288"/>
    </source>
</evidence>
<gene>
    <name evidence="1" type="primary">rhmD</name>
    <name type="ordered locus">AZC_2271</name>
</gene>
<protein>
    <recommendedName>
        <fullName evidence="1">L-rhamnonate dehydratase</fullName>
        <shortName evidence="1">RhamD</shortName>
        <ecNumber evidence="1">4.2.1.90</ecNumber>
    </recommendedName>
</protein>
<accession>A8I5F1</accession>
<organism>
    <name type="scientific">Azorhizobium caulinodans (strain ATCC 43989 / DSM 5975 / JCM 20966 / LMG 6465 / NBRC 14845 / NCIMB 13405 / ORS 571)</name>
    <dbReference type="NCBI Taxonomy" id="438753"/>
    <lineage>
        <taxon>Bacteria</taxon>
        <taxon>Pseudomonadati</taxon>
        <taxon>Pseudomonadota</taxon>
        <taxon>Alphaproteobacteria</taxon>
        <taxon>Hyphomicrobiales</taxon>
        <taxon>Xanthobacteraceae</taxon>
        <taxon>Azorhizobium</taxon>
    </lineage>
</organism>
<comment type="function">
    <text evidence="1">Catalyzes the dehydration of L-rhamnonate to 2-keto-3-deoxy-L-rhamnonate (KDR).</text>
</comment>
<comment type="catalytic activity">
    <reaction evidence="1">
        <text>L-rhamnonate = 2-dehydro-3-deoxy-L-rhamnonate + H2O</text>
        <dbReference type="Rhea" id="RHEA:23080"/>
        <dbReference type="ChEBI" id="CHEBI:15377"/>
        <dbReference type="ChEBI" id="CHEBI:58118"/>
        <dbReference type="ChEBI" id="CHEBI:58371"/>
        <dbReference type="EC" id="4.2.1.90"/>
    </reaction>
</comment>
<comment type="cofactor">
    <cofactor evidence="1">
        <name>Mg(2+)</name>
        <dbReference type="ChEBI" id="CHEBI:18420"/>
    </cofactor>
    <text evidence="1">Binds 1 Mg(2+) ion per subunit.</text>
</comment>
<comment type="subunit">
    <text evidence="1">Homooctamer; tetramer of dimers.</text>
</comment>
<comment type="miscellaneous">
    <text evidence="1">Reaction proceeds via a syn dehydration.</text>
</comment>
<comment type="similarity">
    <text evidence="1">Belongs to the mandelate racemase/muconate lactonizing enzyme family. RhamD subfamily.</text>
</comment>
<feature type="chain" id="PRO_0000351681" description="L-rhamnonate dehydratase">
    <location>
        <begin position="1"/>
        <end position="393"/>
    </location>
</feature>
<feature type="active site" description="Proton acceptor" evidence="1">
    <location>
        <position position="319"/>
    </location>
</feature>
<feature type="binding site" evidence="1">
    <location>
        <position position="22"/>
    </location>
    <ligand>
        <name>substrate</name>
    </ligand>
</feature>
<feature type="binding site" evidence="1">
    <location>
        <position position="48"/>
    </location>
    <ligand>
        <name>substrate</name>
    </ligand>
</feature>
<feature type="binding site" evidence="1">
    <location>
        <position position="214"/>
    </location>
    <ligand>
        <name>Mg(2+)</name>
        <dbReference type="ChEBI" id="CHEBI:18420"/>
    </ligand>
</feature>
<feature type="binding site" evidence="1">
    <location>
        <position position="241"/>
    </location>
    <ligand>
        <name>Mg(2+)</name>
        <dbReference type="ChEBI" id="CHEBI:18420"/>
    </ligand>
</feature>
<feature type="binding site" evidence="1">
    <location>
        <position position="269"/>
    </location>
    <ligand>
        <name>Mg(2+)</name>
        <dbReference type="ChEBI" id="CHEBI:18420"/>
    </ligand>
</feature>
<feature type="binding site" evidence="1">
    <location>
        <position position="339"/>
    </location>
    <ligand>
        <name>substrate</name>
    </ligand>
</feature>
<feature type="site" description="Increases basicity of active site His" evidence="1">
    <location>
        <position position="292"/>
    </location>
</feature>
<feature type="site" description="Transition state stabilizer" evidence="1">
    <location>
        <position position="339"/>
    </location>
</feature>
<dbReference type="EC" id="4.2.1.90" evidence="1"/>
<dbReference type="EMBL" id="AP009384">
    <property type="protein sequence ID" value="BAF88269.1"/>
    <property type="molecule type" value="Genomic_DNA"/>
</dbReference>
<dbReference type="RefSeq" id="WP_012170798.1">
    <property type="nucleotide sequence ID" value="NC_009937.1"/>
</dbReference>
<dbReference type="SMR" id="A8I5F1"/>
<dbReference type="STRING" id="438753.AZC_2271"/>
<dbReference type="KEGG" id="azc:AZC_2271"/>
<dbReference type="eggNOG" id="COG4948">
    <property type="taxonomic scope" value="Bacteria"/>
</dbReference>
<dbReference type="HOGENOM" id="CLU_030273_1_0_5"/>
<dbReference type="Proteomes" id="UP000000270">
    <property type="component" value="Chromosome"/>
</dbReference>
<dbReference type="GO" id="GO:0050032">
    <property type="term" value="F:L-rhamnonate dehydratase activity"/>
    <property type="evidence" value="ECO:0007669"/>
    <property type="project" value="UniProtKB-UniRule"/>
</dbReference>
<dbReference type="GO" id="GO:0000287">
    <property type="term" value="F:magnesium ion binding"/>
    <property type="evidence" value="ECO:0007669"/>
    <property type="project" value="UniProtKB-UniRule"/>
</dbReference>
<dbReference type="GO" id="GO:0009063">
    <property type="term" value="P:amino acid catabolic process"/>
    <property type="evidence" value="ECO:0007669"/>
    <property type="project" value="InterPro"/>
</dbReference>
<dbReference type="GO" id="GO:0016052">
    <property type="term" value="P:carbohydrate catabolic process"/>
    <property type="evidence" value="ECO:0007669"/>
    <property type="project" value="TreeGrafter"/>
</dbReference>
<dbReference type="CDD" id="cd03327">
    <property type="entry name" value="MR_like_2"/>
    <property type="match status" value="1"/>
</dbReference>
<dbReference type="FunFam" id="3.20.20.120:FF:000005">
    <property type="entry name" value="Putative L-rhamnonate dehydratase"/>
    <property type="match status" value="1"/>
</dbReference>
<dbReference type="Gene3D" id="3.20.20.120">
    <property type="entry name" value="Enolase-like C-terminal domain"/>
    <property type="match status" value="1"/>
</dbReference>
<dbReference type="Gene3D" id="3.30.390.10">
    <property type="entry name" value="Enolase-like, N-terminal domain"/>
    <property type="match status" value="1"/>
</dbReference>
<dbReference type="HAMAP" id="MF_01288">
    <property type="entry name" value="Rhamnon_dehydrat"/>
    <property type="match status" value="1"/>
</dbReference>
<dbReference type="InterPro" id="IPR036849">
    <property type="entry name" value="Enolase-like_C_sf"/>
</dbReference>
<dbReference type="InterPro" id="IPR029017">
    <property type="entry name" value="Enolase-like_N"/>
</dbReference>
<dbReference type="InterPro" id="IPR029065">
    <property type="entry name" value="Enolase_C-like"/>
</dbReference>
<dbReference type="InterPro" id="IPR023444">
    <property type="entry name" value="L-Rhamnon_dehydrat"/>
</dbReference>
<dbReference type="InterPro" id="IPR018110">
    <property type="entry name" value="Mandel_Rmase/mucon_lact_enz_CS"/>
</dbReference>
<dbReference type="InterPro" id="IPR013341">
    <property type="entry name" value="Mandelate_racemase_N_dom"/>
</dbReference>
<dbReference type="InterPro" id="IPR046945">
    <property type="entry name" value="RHMD-like"/>
</dbReference>
<dbReference type="NCBIfam" id="NF011968">
    <property type="entry name" value="PRK15440.1"/>
    <property type="match status" value="1"/>
</dbReference>
<dbReference type="PANTHER" id="PTHR13794">
    <property type="entry name" value="ENOLASE SUPERFAMILY, MANDELATE RACEMASE"/>
    <property type="match status" value="1"/>
</dbReference>
<dbReference type="PANTHER" id="PTHR13794:SF58">
    <property type="entry name" value="MITOCHONDRIAL ENOLASE SUPERFAMILY MEMBER 1"/>
    <property type="match status" value="1"/>
</dbReference>
<dbReference type="Pfam" id="PF13378">
    <property type="entry name" value="MR_MLE_C"/>
    <property type="match status" value="1"/>
</dbReference>
<dbReference type="Pfam" id="PF02746">
    <property type="entry name" value="MR_MLE_N"/>
    <property type="match status" value="1"/>
</dbReference>
<dbReference type="SFLD" id="SFLDS00001">
    <property type="entry name" value="Enolase"/>
    <property type="match status" value="1"/>
</dbReference>
<dbReference type="SFLD" id="SFLDF00006">
    <property type="entry name" value="rhamnonate_dehydratase"/>
    <property type="match status" value="1"/>
</dbReference>
<dbReference type="SUPFAM" id="SSF51604">
    <property type="entry name" value="Enolase C-terminal domain-like"/>
    <property type="match status" value="1"/>
</dbReference>
<dbReference type="SUPFAM" id="SSF54826">
    <property type="entry name" value="Enolase N-terminal domain-like"/>
    <property type="match status" value="1"/>
</dbReference>
<dbReference type="PROSITE" id="PS00908">
    <property type="entry name" value="MR_MLE_1"/>
    <property type="match status" value="1"/>
</dbReference>
<proteinExistence type="inferred from homology"/>